<name>DLTA_BACCQ</name>
<proteinExistence type="inferred from homology"/>
<protein>
    <recommendedName>
        <fullName evidence="1">D-alanine--D-alanyl carrier protein ligase</fullName>
        <shortName evidence="1">DCL</shortName>
        <ecNumber evidence="1">6.2.1.54</ecNumber>
    </recommendedName>
    <alternativeName>
        <fullName evidence="1">D-alanine--poly(phosphoribitol) ligase subunit 1</fullName>
    </alternativeName>
    <alternativeName>
        <fullName evidence="1">D-alanine-activating enzyme</fullName>
        <shortName evidence="1">DAE</shortName>
    </alternativeName>
</protein>
<feature type="chain" id="PRO_1000146971" description="D-alanine--D-alanyl carrier protein ligase">
    <location>
        <begin position="1"/>
        <end position="504"/>
    </location>
</feature>
<feature type="binding site" evidence="1">
    <location>
        <begin position="152"/>
        <end position="153"/>
    </location>
    <ligand>
        <name>ATP</name>
        <dbReference type="ChEBI" id="CHEBI:30616"/>
    </ligand>
</feature>
<feature type="binding site" evidence="1">
    <location>
        <position position="197"/>
    </location>
    <ligand>
        <name>D-alanine</name>
        <dbReference type="ChEBI" id="CHEBI:57416"/>
    </ligand>
</feature>
<feature type="binding site" evidence="1">
    <location>
        <begin position="292"/>
        <end position="297"/>
    </location>
    <ligand>
        <name>ATP</name>
        <dbReference type="ChEBI" id="CHEBI:30616"/>
    </ligand>
</feature>
<feature type="binding site" evidence="1">
    <location>
        <position position="301"/>
    </location>
    <ligand>
        <name>D-alanine</name>
        <dbReference type="ChEBI" id="CHEBI:57416"/>
    </ligand>
</feature>
<feature type="binding site" evidence="1">
    <location>
        <position position="383"/>
    </location>
    <ligand>
        <name>ATP</name>
        <dbReference type="ChEBI" id="CHEBI:30616"/>
    </ligand>
</feature>
<feature type="binding site" evidence="1">
    <location>
        <begin position="394"/>
        <end position="397"/>
    </location>
    <ligand>
        <name>ATP</name>
        <dbReference type="ChEBI" id="CHEBI:30616"/>
    </ligand>
</feature>
<feature type="binding site" evidence="1">
    <location>
        <position position="492"/>
    </location>
    <ligand>
        <name>ATP</name>
        <dbReference type="ChEBI" id="CHEBI:30616"/>
    </ligand>
</feature>
<feature type="binding site" evidence="1">
    <location>
        <position position="492"/>
    </location>
    <ligand>
        <name>D-alanine</name>
        <dbReference type="ChEBI" id="CHEBI:57416"/>
    </ligand>
</feature>
<gene>
    <name evidence="1" type="primary">dltA</name>
    <name type="ordered locus">BCQ_1445</name>
</gene>
<comment type="function">
    <text evidence="1">Catalyzes the first step in the D-alanylation of lipoteichoic acid (LTA), the activation of D-alanine and its transfer onto the D-alanyl carrier protein (Dcp) DltC. In an ATP-dependent two-step reaction, forms a high energy D-alanyl-AMP intermediate, followed by transfer of the D-alanyl residue as a thiol ester to the phosphopantheinyl prosthetic group of the Dcp. D-alanylation of LTA plays an important role in modulating the properties of the cell wall in Gram-positive bacteria, influencing the net charge of the cell wall.</text>
</comment>
<comment type="catalytic activity">
    <reaction evidence="1">
        <text>holo-[D-alanyl-carrier protein] + D-alanine + ATP = D-alanyl-[D-alanyl-carrier protein] + AMP + diphosphate</text>
        <dbReference type="Rhea" id="RHEA:55132"/>
        <dbReference type="Rhea" id="RHEA-COMP:14102"/>
        <dbReference type="Rhea" id="RHEA-COMP:14103"/>
        <dbReference type="ChEBI" id="CHEBI:30616"/>
        <dbReference type="ChEBI" id="CHEBI:33019"/>
        <dbReference type="ChEBI" id="CHEBI:57416"/>
        <dbReference type="ChEBI" id="CHEBI:64479"/>
        <dbReference type="ChEBI" id="CHEBI:138620"/>
        <dbReference type="ChEBI" id="CHEBI:456215"/>
        <dbReference type="EC" id="6.2.1.54"/>
    </reaction>
</comment>
<comment type="pathway">
    <text evidence="1">Cell wall biogenesis; lipoteichoic acid biosynthesis.</text>
</comment>
<comment type="subcellular location">
    <subcellularLocation>
        <location evidence="1">Cytoplasm</location>
    </subcellularLocation>
</comment>
<comment type="similarity">
    <text evidence="1">Belongs to the ATP-dependent AMP-binding enzyme family. DltA subfamily.</text>
</comment>
<reference key="1">
    <citation type="journal article" date="2009" name="J. Bacteriol.">
        <title>Complete genome sequence of the extremophilic Bacillus cereus strain Q1 with industrial applications.</title>
        <authorList>
            <person name="Xiong Z."/>
            <person name="Jiang Y."/>
            <person name="Qi D."/>
            <person name="Lu H."/>
            <person name="Yang F."/>
            <person name="Yang J."/>
            <person name="Chen L."/>
            <person name="Sun L."/>
            <person name="Xu X."/>
            <person name="Xue Y."/>
            <person name="Zhu Y."/>
            <person name="Jin Q."/>
        </authorList>
    </citation>
    <scope>NUCLEOTIDE SEQUENCE [LARGE SCALE GENOMIC DNA]</scope>
    <source>
        <strain>Q1</strain>
    </source>
</reference>
<organism>
    <name type="scientific">Bacillus cereus (strain Q1)</name>
    <dbReference type="NCBI Taxonomy" id="361100"/>
    <lineage>
        <taxon>Bacteria</taxon>
        <taxon>Bacillati</taxon>
        <taxon>Bacillota</taxon>
        <taxon>Bacilli</taxon>
        <taxon>Bacillales</taxon>
        <taxon>Bacillaceae</taxon>
        <taxon>Bacillus</taxon>
        <taxon>Bacillus cereus group</taxon>
    </lineage>
</organism>
<dbReference type="EC" id="6.2.1.54" evidence="1"/>
<dbReference type="EMBL" id="CP000227">
    <property type="protein sequence ID" value="ACM11873.1"/>
    <property type="molecule type" value="Genomic_DNA"/>
</dbReference>
<dbReference type="SMR" id="B9IUW2"/>
<dbReference type="KEGG" id="bcq:BCQ_1445"/>
<dbReference type="HOGENOM" id="CLU_000022_2_12_9"/>
<dbReference type="UniPathway" id="UPA00556"/>
<dbReference type="Proteomes" id="UP000000441">
    <property type="component" value="Chromosome"/>
</dbReference>
<dbReference type="GO" id="GO:0005737">
    <property type="term" value="C:cytoplasm"/>
    <property type="evidence" value="ECO:0007669"/>
    <property type="project" value="UniProtKB-SubCell"/>
</dbReference>
<dbReference type="GO" id="GO:0005524">
    <property type="term" value="F:ATP binding"/>
    <property type="evidence" value="ECO:0007669"/>
    <property type="project" value="UniProtKB-KW"/>
</dbReference>
<dbReference type="GO" id="GO:0047473">
    <property type="term" value="F:D-alanine [D-alanyl carrier protein] ligase activity"/>
    <property type="evidence" value="ECO:0007669"/>
    <property type="project" value="UniProtKB-UniRule"/>
</dbReference>
<dbReference type="GO" id="GO:0070395">
    <property type="term" value="P:lipoteichoic acid biosynthetic process"/>
    <property type="evidence" value="ECO:0007669"/>
    <property type="project" value="UniProtKB-UniRule"/>
</dbReference>
<dbReference type="CDD" id="cd05945">
    <property type="entry name" value="DltA"/>
    <property type="match status" value="1"/>
</dbReference>
<dbReference type="FunFam" id="3.30.300.30:FF:000012">
    <property type="entry name" value="D-alanine--D-alanyl carrier protein ligase"/>
    <property type="match status" value="1"/>
</dbReference>
<dbReference type="FunFam" id="3.40.50.12780:FF:000015">
    <property type="entry name" value="D-alanine--D-alanyl carrier protein ligase"/>
    <property type="match status" value="1"/>
</dbReference>
<dbReference type="Gene3D" id="3.30.300.30">
    <property type="match status" value="1"/>
</dbReference>
<dbReference type="Gene3D" id="3.40.50.12780">
    <property type="entry name" value="N-terminal domain of ligase-like"/>
    <property type="match status" value="1"/>
</dbReference>
<dbReference type="HAMAP" id="MF_00593">
    <property type="entry name" value="DltA"/>
    <property type="match status" value="1"/>
</dbReference>
<dbReference type="InterPro" id="IPR010071">
    <property type="entry name" value="AA_adenyl_dom"/>
</dbReference>
<dbReference type="InterPro" id="IPR025110">
    <property type="entry name" value="AMP-bd_C"/>
</dbReference>
<dbReference type="InterPro" id="IPR045851">
    <property type="entry name" value="AMP-bd_C_sf"/>
</dbReference>
<dbReference type="InterPro" id="IPR020845">
    <property type="entry name" value="AMP-binding_CS"/>
</dbReference>
<dbReference type="InterPro" id="IPR000873">
    <property type="entry name" value="AMP-dep_synth/lig_dom"/>
</dbReference>
<dbReference type="InterPro" id="IPR042099">
    <property type="entry name" value="ANL_N_sf"/>
</dbReference>
<dbReference type="InterPro" id="IPR010072">
    <property type="entry name" value="DltA"/>
</dbReference>
<dbReference type="InterPro" id="IPR044507">
    <property type="entry name" value="DltA-like"/>
</dbReference>
<dbReference type="NCBIfam" id="TIGR01733">
    <property type="entry name" value="AA-adenyl-dom"/>
    <property type="match status" value="1"/>
</dbReference>
<dbReference type="NCBIfam" id="TIGR01734">
    <property type="entry name" value="D-ala-DACP-lig"/>
    <property type="match status" value="1"/>
</dbReference>
<dbReference type="NCBIfam" id="NF003417">
    <property type="entry name" value="PRK04813.1"/>
    <property type="match status" value="1"/>
</dbReference>
<dbReference type="PANTHER" id="PTHR45398">
    <property type="match status" value="1"/>
</dbReference>
<dbReference type="PANTHER" id="PTHR45398:SF1">
    <property type="entry name" value="ENZYME, PUTATIVE (JCVI)-RELATED"/>
    <property type="match status" value="1"/>
</dbReference>
<dbReference type="Pfam" id="PF00501">
    <property type="entry name" value="AMP-binding"/>
    <property type="match status" value="1"/>
</dbReference>
<dbReference type="Pfam" id="PF13193">
    <property type="entry name" value="AMP-binding_C"/>
    <property type="match status" value="1"/>
</dbReference>
<dbReference type="SUPFAM" id="SSF56801">
    <property type="entry name" value="Acetyl-CoA synthetase-like"/>
    <property type="match status" value="1"/>
</dbReference>
<dbReference type="PROSITE" id="PS00455">
    <property type="entry name" value="AMP_BINDING"/>
    <property type="match status" value="1"/>
</dbReference>
<sequence length="504" mass="56594">MKLLEQIEKWAIETPDQTAFVWRDAKITYKQLKEDSDALAHWISSEYPDDRSPIMVYGHMQPEMIINFLGCVKAGHAYIPVDLSIPADRVQRIAENSGAKLLLSGTEVTVTDLPVRIVSEDNLKDIFFTHKGKTPNPEHAVKGDENFYIIYTSGSTGNPKGVQITYNCLVSFTKWAVEDFNLQTGQVFLNQAPFSFDLSVMDIYPSLVTGGTLWAIDKDMIARPKDLFASLEQSDIQVWTSTPSFAEMCLMEASFSESMLPNMKTFLFCGEVLPNEVARKLIERFPKATIMNTYGPTEATVAVTGIHVTEEVLDQYKSLPVGYCKSDCRLLIMKEDGTIAPDGEKGEIVIVGPSVSVGYLGSPELTEKAFTMIDGERAYKTGDAGYVENGLLFYNGRLDFQIKLHGYRMELEEIEHHLRACSYVEGAVIVPIKKGEKYDYLLAVVVPGEHSFEKEFKLTSAIKKELNERLPNYMIPRKFMYQSSIPMTPNGKVDRKKLLSEVTA</sequence>
<keyword id="KW-0067">ATP-binding</keyword>
<keyword id="KW-0963">Cytoplasm</keyword>
<keyword id="KW-0436">Ligase</keyword>
<keyword id="KW-0547">Nucleotide-binding</keyword>
<evidence type="ECO:0000255" key="1">
    <source>
        <dbReference type="HAMAP-Rule" id="MF_00593"/>
    </source>
</evidence>
<accession>B9IUW2</accession>